<gene>
    <name evidence="1" type="primary">rpsZ</name>
    <name evidence="1" type="synonym">rpsN</name>
</gene>
<accession>P54798</accession>
<dbReference type="PIR" id="S48688">
    <property type="entry name" value="S48688"/>
</dbReference>
<dbReference type="SMR" id="P54798"/>
<dbReference type="GO" id="GO:0015935">
    <property type="term" value="C:small ribosomal subunit"/>
    <property type="evidence" value="ECO:0007669"/>
    <property type="project" value="TreeGrafter"/>
</dbReference>
<dbReference type="GO" id="GO:0019843">
    <property type="term" value="F:rRNA binding"/>
    <property type="evidence" value="ECO:0007669"/>
    <property type="project" value="UniProtKB-UniRule"/>
</dbReference>
<dbReference type="GO" id="GO:0003735">
    <property type="term" value="F:structural constituent of ribosome"/>
    <property type="evidence" value="ECO:0007669"/>
    <property type="project" value="InterPro"/>
</dbReference>
<dbReference type="GO" id="GO:0008270">
    <property type="term" value="F:zinc ion binding"/>
    <property type="evidence" value="ECO:0007669"/>
    <property type="project" value="UniProtKB-UniRule"/>
</dbReference>
<dbReference type="GO" id="GO:0006412">
    <property type="term" value="P:translation"/>
    <property type="evidence" value="ECO:0007669"/>
    <property type="project" value="UniProtKB-UniRule"/>
</dbReference>
<dbReference type="FunFam" id="4.10.830.10:FF:000001">
    <property type="entry name" value="30S ribosomal protein S14 type Z"/>
    <property type="match status" value="1"/>
</dbReference>
<dbReference type="Gene3D" id="4.10.830.10">
    <property type="entry name" value="30s Ribosomal Protein S14, Chain N"/>
    <property type="match status" value="1"/>
</dbReference>
<dbReference type="HAMAP" id="MF_01364_B">
    <property type="entry name" value="Ribosomal_uS14_2_B"/>
    <property type="match status" value="1"/>
</dbReference>
<dbReference type="InterPro" id="IPR001209">
    <property type="entry name" value="Ribosomal_uS14"/>
</dbReference>
<dbReference type="InterPro" id="IPR023053">
    <property type="entry name" value="Ribosomal_uS14_bact"/>
</dbReference>
<dbReference type="InterPro" id="IPR018271">
    <property type="entry name" value="Ribosomal_uS14_CS"/>
</dbReference>
<dbReference type="InterPro" id="IPR043140">
    <property type="entry name" value="Ribosomal_uS14_sf"/>
</dbReference>
<dbReference type="NCBIfam" id="NF005974">
    <property type="entry name" value="PRK08061.1"/>
    <property type="match status" value="1"/>
</dbReference>
<dbReference type="PANTHER" id="PTHR19836">
    <property type="entry name" value="30S RIBOSOMAL PROTEIN S14"/>
    <property type="match status" value="1"/>
</dbReference>
<dbReference type="PANTHER" id="PTHR19836:SF26">
    <property type="entry name" value="SMALL RIBOSOMAL SUBUNIT PROTEIN US14B"/>
    <property type="match status" value="1"/>
</dbReference>
<dbReference type="Pfam" id="PF00253">
    <property type="entry name" value="Ribosomal_S14"/>
    <property type="match status" value="1"/>
</dbReference>
<dbReference type="SUPFAM" id="SSF57716">
    <property type="entry name" value="Glucocorticoid receptor-like (DNA-binding domain)"/>
    <property type="match status" value="1"/>
</dbReference>
<dbReference type="PROSITE" id="PS00527">
    <property type="entry name" value="RIBOSOMAL_S14"/>
    <property type="match status" value="1"/>
</dbReference>
<proteinExistence type="evidence at protein level"/>
<keyword id="KW-0903">Direct protein sequencing</keyword>
<keyword id="KW-0479">Metal-binding</keyword>
<keyword id="KW-0687">Ribonucleoprotein</keyword>
<keyword id="KW-0689">Ribosomal protein</keyword>
<keyword id="KW-0694">RNA-binding</keyword>
<keyword id="KW-0699">rRNA-binding</keyword>
<keyword id="KW-0862">Zinc</keyword>
<feature type="initiator methionine" description="Removed" evidence="2 3">
    <location>
        <position position="1"/>
    </location>
</feature>
<feature type="chain" id="PRO_0000130871" description="Small ribosomal subunit protein uS14">
    <location>
        <begin position="2"/>
        <end position="61"/>
    </location>
</feature>
<feature type="binding site" evidence="1">
    <location>
        <position position="24"/>
    </location>
    <ligand>
        <name>Zn(2+)</name>
        <dbReference type="ChEBI" id="CHEBI:29105"/>
    </ligand>
</feature>
<feature type="binding site" evidence="1">
    <location>
        <position position="27"/>
    </location>
    <ligand>
        <name>Zn(2+)</name>
        <dbReference type="ChEBI" id="CHEBI:29105"/>
    </ligand>
</feature>
<feature type="binding site" evidence="1">
    <location>
        <position position="40"/>
    </location>
    <ligand>
        <name>Zn(2+)</name>
        <dbReference type="ChEBI" id="CHEBI:29105"/>
    </ligand>
</feature>
<feature type="binding site" evidence="1">
    <location>
        <position position="43"/>
    </location>
    <ligand>
        <name>Zn(2+)</name>
        <dbReference type="ChEBI" id="CHEBI:29105"/>
    </ligand>
</feature>
<feature type="sequence variant" description="In strain: 10.">
    <original>I</original>
    <variation>A</variation>
    <location>
        <position position="8"/>
    </location>
</feature>
<sequence length="61" mass="7322">MAKKSMIIKQKRTPKFKVRAYTRCERCGRPHSVYRKFKLCRICFRELAYKGQLPGIKKASW</sequence>
<name>RS14Z_GEOSE</name>
<organism>
    <name type="scientific">Geobacillus stearothermophilus</name>
    <name type="common">Bacillus stearothermophilus</name>
    <dbReference type="NCBI Taxonomy" id="1422"/>
    <lineage>
        <taxon>Bacteria</taxon>
        <taxon>Bacillati</taxon>
        <taxon>Bacillota</taxon>
        <taxon>Bacilli</taxon>
        <taxon>Bacillales</taxon>
        <taxon>Anoxybacillaceae</taxon>
        <taxon>Geobacillus</taxon>
    </lineage>
</organism>
<evidence type="ECO:0000255" key="1">
    <source>
        <dbReference type="HAMAP-Rule" id="MF_01364"/>
    </source>
</evidence>
<evidence type="ECO:0000269" key="2">
    <source>
    </source>
</evidence>
<evidence type="ECO:0000269" key="3">
    <source>
    </source>
</evidence>
<evidence type="ECO:0000305" key="4"/>
<reference key="1">
    <citation type="journal article" date="1994" name="FEBS Lett.">
        <title>Complete amino acid sequence of ribosomal protein S14 from Bacillus stearothermophilus and homology studies to other ribosomal proteins.</title>
        <authorList>
            <person name="Herfurth E."/>
            <person name="Briesemeister U."/>
            <person name="Wittmann-Liebold B."/>
        </authorList>
    </citation>
    <scope>PROTEIN SEQUENCE OF 2-61</scope>
    <source>
        <strain>799</strain>
    </source>
</reference>
<reference key="2">
    <citation type="journal article" date="1974" name="FEBS Lett.">
        <title>Procaryotic ribosomal proteins: N-terminal sequence homologies and structural correspondence of 30 S ribosomal proteins from Escherichia coli and Bacillus stearothermophilus.</title>
        <authorList>
            <person name="Yaguchi M."/>
            <person name="Matheson A.T."/>
            <person name="Visentin L.P."/>
        </authorList>
    </citation>
    <scope>PROTEIN SEQUENCE OF 2-16</scope>
    <source>
        <strain>DSM 13240 / CIP 106956 / 10</strain>
    </source>
</reference>
<reference key="3">
    <citation type="journal article" date="1995" name="EMBO J.">
        <title>Protein-rRNA binding features and their structural and functional implications in ribosomes as determined by cross-linking studies.</title>
        <authorList>
            <person name="Urlaub H."/>
            <person name="Kruft V."/>
            <person name="Bischof O."/>
            <person name="Mueller E.-C."/>
            <person name="Wittmann-Liebold B."/>
        </authorList>
    </citation>
    <scope>PROTEIN SEQUENCE OF 10-23</scope>
    <scope>CROSS-LINKING TO RRNA</scope>
    <source>
        <strain>799</strain>
    </source>
</reference>
<protein>
    <recommendedName>
        <fullName evidence="1">Small ribosomal subunit protein uS14</fullName>
    </recommendedName>
    <alternativeName>
        <fullName evidence="4">30S ribosomal protein S14 type Z</fullName>
    </alternativeName>
    <alternativeName>
        <fullName>BS21</fullName>
    </alternativeName>
</protein>
<comment type="function">
    <text evidence="1">Binds 16S rRNA, required for the assembly of 30S particles and may also be responsible for determining the conformation of the 16S rRNA at the A site.</text>
</comment>
<comment type="cofactor">
    <cofactor evidence="1">
        <name>Zn(2+)</name>
        <dbReference type="ChEBI" id="CHEBI:29105"/>
    </cofactor>
    <text evidence="1">Binds 1 zinc ion per subunit.</text>
</comment>
<comment type="subunit">
    <text evidence="1">Part of the 30S ribosomal subunit. Contacts proteins S3 and S10.</text>
</comment>
<comment type="similarity">
    <text evidence="1">Belongs to the universal ribosomal protein uS14 family. Zinc-binding uS14 subfamily.</text>
</comment>